<keyword id="KW-0106">Calcium</keyword>
<keyword id="KW-0903">Direct protein sequencing</keyword>
<keyword id="KW-0349">Heme</keyword>
<keyword id="KW-0376">Hydrogen peroxide</keyword>
<keyword id="KW-0408">Iron</keyword>
<keyword id="KW-0479">Metal-binding</keyword>
<keyword id="KW-0560">Oxidoreductase</keyword>
<keyword id="KW-0575">Peroxidase</keyword>
<keyword id="KW-0964">Secreted</keyword>
<dbReference type="EC" id="1.11.1.7"/>
<dbReference type="GO" id="GO:0005576">
    <property type="term" value="C:extracellular region"/>
    <property type="evidence" value="ECO:0007669"/>
    <property type="project" value="UniProtKB-SubCell"/>
</dbReference>
<dbReference type="GO" id="GO:0140825">
    <property type="term" value="F:lactoperoxidase activity"/>
    <property type="evidence" value="ECO:0007669"/>
    <property type="project" value="UniProtKB-EC"/>
</dbReference>
<dbReference type="GO" id="GO:0046872">
    <property type="term" value="F:metal ion binding"/>
    <property type="evidence" value="ECO:0007669"/>
    <property type="project" value="UniProtKB-KW"/>
</dbReference>
<dbReference type="GO" id="GO:0042744">
    <property type="term" value="P:hydrogen peroxide catabolic process"/>
    <property type="evidence" value="ECO:0007669"/>
    <property type="project" value="UniProtKB-KW"/>
</dbReference>
<reference key="1">
    <citation type="journal article" date="2009" name="Physiol. Plantarum">
        <title>The presence of sinapyl lignin in Ginkgo biloba cell cultures changes our views of the evolution of lignin biosynthesis.</title>
        <authorList>
            <person name="Novo Uzal E."/>
            <person name="Gomez Ros L.V."/>
            <person name="Pomar F."/>
            <person name="Bernal M.A."/>
            <person name="Paradela A."/>
            <person name="Albar J.P."/>
            <person name="Ros Barcelo A."/>
        </authorList>
    </citation>
    <scope>PROTEIN SEQUENCE</scope>
    <source>
        <strain>PC-1121</strain>
        <tissue>Callus</tissue>
    </source>
</reference>
<comment type="function">
    <text evidence="4">Removal of H(2)O(2), oxidation of toxic reductants, biosynthesis and degradation of lignin, suberization, auxin catabolism, response to environmental stresses such as wounding, pathogen attack and oxidative stress. These functions might be dependent on each isozyme/isoform in each plant tissue.</text>
</comment>
<comment type="catalytic activity">
    <reaction>
        <text>2 a phenolic donor + H2O2 = 2 a phenolic radical donor + 2 H2O</text>
        <dbReference type="Rhea" id="RHEA:56136"/>
        <dbReference type="ChEBI" id="CHEBI:15377"/>
        <dbReference type="ChEBI" id="CHEBI:16240"/>
        <dbReference type="ChEBI" id="CHEBI:139520"/>
        <dbReference type="ChEBI" id="CHEBI:139521"/>
        <dbReference type="EC" id="1.11.1.7"/>
    </reaction>
</comment>
<comment type="cofactor">
    <cofactor evidence="1 3">
        <name>Ca(2+)</name>
        <dbReference type="ChEBI" id="CHEBI:29108"/>
    </cofactor>
    <text evidence="1 3">Binds 2 calcium ions per subunit.</text>
</comment>
<comment type="cofactor">
    <cofactor evidence="1 3">
        <name>heme b</name>
        <dbReference type="ChEBI" id="CHEBI:60344"/>
    </cofactor>
    <text evidence="1 3">Binds 1 heme b (iron(II)-protoporphyrin IX) group per subunit.</text>
</comment>
<comment type="subcellular location">
    <subcellularLocation>
        <location evidence="2 3">Secreted</location>
    </subcellularLocation>
</comment>
<comment type="similarity">
    <text evidence="3">Belongs to the peroxidase family. Classical plant (class III) peroxidase subfamily.</text>
</comment>
<name>PER3_BETPN</name>
<proteinExistence type="evidence at protein level"/>
<evidence type="ECO:0000250" key="1">
    <source>
        <dbReference type="UniProtKB" id="P22195"/>
    </source>
</evidence>
<evidence type="ECO:0000250" key="2">
    <source>
        <dbReference type="UniProtKB" id="P84516"/>
    </source>
</evidence>
<evidence type="ECO:0000255" key="3">
    <source>
        <dbReference type="PROSITE-ProRule" id="PRU00297"/>
    </source>
</evidence>
<evidence type="ECO:0000305" key="4"/>
<sequence>NLAPLDLQTPTAFDNNYYK</sequence>
<protein>
    <recommendedName>
        <fullName>Peroxidase 3</fullName>
        <ecNumber>1.11.1.7</ecNumber>
    </recommendedName>
</protein>
<organism>
    <name type="scientific">Betula pendula</name>
    <name type="common">European white birch</name>
    <name type="synonym">Betula verrucosa</name>
    <dbReference type="NCBI Taxonomy" id="3505"/>
    <lineage>
        <taxon>Eukaryota</taxon>
        <taxon>Viridiplantae</taxon>
        <taxon>Streptophyta</taxon>
        <taxon>Embryophyta</taxon>
        <taxon>Tracheophyta</taxon>
        <taxon>Spermatophyta</taxon>
        <taxon>Magnoliopsida</taxon>
        <taxon>eudicotyledons</taxon>
        <taxon>Gunneridae</taxon>
        <taxon>Pentapetalae</taxon>
        <taxon>rosids</taxon>
        <taxon>fabids</taxon>
        <taxon>Fagales</taxon>
        <taxon>Betulaceae</taxon>
        <taxon>Betula</taxon>
    </lineage>
</organism>
<feature type="chain" id="PRO_0000314640" description="Peroxidase 3">
    <location>
        <begin position="1" status="less than"/>
        <end position="19" status="greater than"/>
    </location>
</feature>
<feature type="binding site" evidence="1 3">
    <location>
        <position position="6"/>
    </location>
    <ligand>
        <name>Ca(2+)</name>
        <dbReference type="ChEBI" id="CHEBI:29108"/>
        <label>2</label>
    </ligand>
</feature>
<feature type="binding site" evidence="1 3">
    <location>
        <position position="9"/>
    </location>
    <ligand>
        <name>Ca(2+)</name>
        <dbReference type="ChEBI" id="CHEBI:29108"/>
        <label>2</label>
    </ligand>
</feature>
<feature type="binding site" evidence="1 3">
    <location>
        <position position="14"/>
    </location>
    <ligand>
        <name>Ca(2+)</name>
        <dbReference type="ChEBI" id="CHEBI:29108"/>
        <label>2</label>
    </ligand>
</feature>
<feature type="non-terminal residue">
    <location>
        <position position="1"/>
    </location>
</feature>
<feature type="non-terminal residue">
    <location>
        <position position="19"/>
    </location>
</feature>
<accession>P85334</accession>